<gene>
    <name evidence="2" type="primary">rpsL</name>
    <name type="ordered locus">Shewmr7_0189</name>
</gene>
<comment type="function">
    <text evidence="2">With S4 and S5 plays an important role in translational accuracy.</text>
</comment>
<comment type="function">
    <text evidence="2">Interacts with and stabilizes bases of the 16S rRNA that are involved in tRNA selection in the A site and with the mRNA backbone. Located at the interface of the 30S and 50S subunits, it traverses the body of the 30S subunit contacting proteins on the other side and probably holding the rRNA structure together. The combined cluster of proteins S8, S12 and S17 appears to hold together the shoulder and platform of the 30S subunit.</text>
</comment>
<comment type="subunit">
    <text evidence="2">Part of the 30S ribosomal subunit. Contacts proteins S8 and S17. May interact with IF1 in the 30S initiation complex.</text>
</comment>
<comment type="similarity">
    <text evidence="2">Belongs to the universal ribosomal protein uS12 family.</text>
</comment>
<keyword id="KW-0488">Methylation</keyword>
<keyword id="KW-0687">Ribonucleoprotein</keyword>
<keyword id="KW-0689">Ribosomal protein</keyword>
<keyword id="KW-0694">RNA-binding</keyword>
<keyword id="KW-0699">rRNA-binding</keyword>
<keyword id="KW-0820">tRNA-binding</keyword>
<dbReference type="EMBL" id="CP000444">
    <property type="protein sequence ID" value="ABI41195.1"/>
    <property type="molecule type" value="Genomic_DNA"/>
</dbReference>
<dbReference type="SMR" id="Q0I0B0"/>
<dbReference type="KEGG" id="shm:Shewmr7_0189"/>
<dbReference type="HOGENOM" id="CLU_104295_1_2_6"/>
<dbReference type="GO" id="GO:0015935">
    <property type="term" value="C:small ribosomal subunit"/>
    <property type="evidence" value="ECO:0007669"/>
    <property type="project" value="InterPro"/>
</dbReference>
<dbReference type="GO" id="GO:0019843">
    <property type="term" value="F:rRNA binding"/>
    <property type="evidence" value="ECO:0007669"/>
    <property type="project" value="UniProtKB-UniRule"/>
</dbReference>
<dbReference type="GO" id="GO:0003735">
    <property type="term" value="F:structural constituent of ribosome"/>
    <property type="evidence" value="ECO:0007669"/>
    <property type="project" value="InterPro"/>
</dbReference>
<dbReference type="GO" id="GO:0000049">
    <property type="term" value="F:tRNA binding"/>
    <property type="evidence" value="ECO:0007669"/>
    <property type="project" value="UniProtKB-UniRule"/>
</dbReference>
<dbReference type="GO" id="GO:0006412">
    <property type="term" value="P:translation"/>
    <property type="evidence" value="ECO:0007669"/>
    <property type="project" value="UniProtKB-UniRule"/>
</dbReference>
<dbReference type="CDD" id="cd03368">
    <property type="entry name" value="Ribosomal_S12"/>
    <property type="match status" value="1"/>
</dbReference>
<dbReference type="FunFam" id="2.40.50.140:FF:000001">
    <property type="entry name" value="30S ribosomal protein S12"/>
    <property type="match status" value="1"/>
</dbReference>
<dbReference type="Gene3D" id="2.40.50.140">
    <property type="entry name" value="Nucleic acid-binding proteins"/>
    <property type="match status" value="1"/>
</dbReference>
<dbReference type="HAMAP" id="MF_00403_B">
    <property type="entry name" value="Ribosomal_uS12_B"/>
    <property type="match status" value="1"/>
</dbReference>
<dbReference type="InterPro" id="IPR012340">
    <property type="entry name" value="NA-bd_OB-fold"/>
</dbReference>
<dbReference type="InterPro" id="IPR006032">
    <property type="entry name" value="Ribosomal_uS12"/>
</dbReference>
<dbReference type="InterPro" id="IPR005679">
    <property type="entry name" value="Ribosomal_uS12_bac"/>
</dbReference>
<dbReference type="NCBIfam" id="TIGR00981">
    <property type="entry name" value="rpsL_bact"/>
    <property type="match status" value="1"/>
</dbReference>
<dbReference type="PANTHER" id="PTHR11652">
    <property type="entry name" value="30S RIBOSOMAL PROTEIN S12 FAMILY MEMBER"/>
    <property type="match status" value="1"/>
</dbReference>
<dbReference type="Pfam" id="PF00164">
    <property type="entry name" value="Ribosom_S12_S23"/>
    <property type="match status" value="1"/>
</dbReference>
<dbReference type="PIRSF" id="PIRSF002133">
    <property type="entry name" value="Ribosomal_S12/S23"/>
    <property type="match status" value="1"/>
</dbReference>
<dbReference type="PRINTS" id="PR01034">
    <property type="entry name" value="RIBOSOMALS12"/>
</dbReference>
<dbReference type="SUPFAM" id="SSF50249">
    <property type="entry name" value="Nucleic acid-binding proteins"/>
    <property type="match status" value="1"/>
</dbReference>
<dbReference type="PROSITE" id="PS00055">
    <property type="entry name" value="RIBOSOMAL_S12"/>
    <property type="match status" value="1"/>
</dbReference>
<sequence>MATVNQLVRKPRAPKVDKTNVPALNACPQKRGVCTRVYTTTPKKPNSALRKVARVRLTNGFEVTSYIGGEGHNLQEHSVILIRGGRVKDLPGVRYHTVRGALDCAGVTSRRQSRSKYGAKRPKS</sequence>
<name>RS12_SHESR</name>
<feature type="chain" id="PRO_0000263592" description="Small ribosomal subunit protein uS12">
    <location>
        <begin position="1"/>
        <end position="124"/>
    </location>
</feature>
<feature type="modified residue" description="3-methylthioaspartic acid" evidence="1">
    <location>
        <position position="89"/>
    </location>
</feature>
<reference key="1">
    <citation type="submission" date="2006-08" db="EMBL/GenBank/DDBJ databases">
        <title>Complete sequence of chromosome 1 of Shewanella sp. MR-7.</title>
        <authorList>
            <person name="Copeland A."/>
            <person name="Lucas S."/>
            <person name="Lapidus A."/>
            <person name="Barry K."/>
            <person name="Detter J.C."/>
            <person name="Glavina del Rio T."/>
            <person name="Hammon N."/>
            <person name="Israni S."/>
            <person name="Dalin E."/>
            <person name="Tice H."/>
            <person name="Pitluck S."/>
            <person name="Kiss H."/>
            <person name="Brettin T."/>
            <person name="Bruce D."/>
            <person name="Han C."/>
            <person name="Tapia R."/>
            <person name="Gilna P."/>
            <person name="Schmutz J."/>
            <person name="Larimer F."/>
            <person name="Land M."/>
            <person name="Hauser L."/>
            <person name="Kyrpides N."/>
            <person name="Mikhailova N."/>
            <person name="Nealson K."/>
            <person name="Konstantinidis K."/>
            <person name="Klappenbach J."/>
            <person name="Tiedje J."/>
            <person name="Richardson P."/>
        </authorList>
    </citation>
    <scope>NUCLEOTIDE SEQUENCE [LARGE SCALE GENOMIC DNA]</scope>
    <source>
        <strain>MR-7</strain>
    </source>
</reference>
<protein>
    <recommendedName>
        <fullName evidence="2">Small ribosomal subunit protein uS12</fullName>
    </recommendedName>
    <alternativeName>
        <fullName evidence="3">30S ribosomal protein S12</fullName>
    </alternativeName>
</protein>
<accession>Q0I0B0</accession>
<evidence type="ECO:0000250" key="1"/>
<evidence type="ECO:0000255" key="2">
    <source>
        <dbReference type="HAMAP-Rule" id="MF_00403"/>
    </source>
</evidence>
<evidence type="ECO:0000305" key="3"/>
<organism>
    <name type="scientific">Shewanella sp. (strain MR-7)</name>
    <dbReference type="NCBI Taxonomy" id="60481"/>
    <lineage>
        <taxon>Bacteria</taxon>
        <taxon>Pseudomonadati</taxon>
        <taxon>Pseudomonadota</taxon>
        <taxon>Gammaproteobacteria</taxon>
        <taxon>Alteromonadales</taxon>
        <taxon>Shewanellaceae</taxon>
        <taxon>Shewanella</taxon>
    </lineage>
</organism>
<proteinExistence type="inferred from homology"/>